<sequence>MLCQNCKINDSTIHLYTNLNGKQKQIDLCQNCYKIIKTDPNNSLFKGMTDLNNRDFDPFGDFFNDLNNFRPSSNTPPIPPTQSGGGYGGNGGYGSQNRGSAQTPPPSQEKGLLEEFGINVTEIARRGDIDPVIGRDDEIIRVIEILNRRTKNNPVLIGEPGVGKTAVVEGLAQKIVDGDVPHKLQGKQVIRLDVVSLVQGTGIRGQFEERMQKLMEEIRKREDIILFIDEIHEIVGAGSASDGNMDAGNILKPALARGELQLVGATTLNEYRIIEKDAALERRMQPVKVDEPTVDETITILKGIQKKYEDYHHVQYTDAAIEAAATLSNRYIQDRFLPDKAIDLLDEAGSKMNLTLNFVDPKVIDQRLIEAENLKSQATREEDFEKAAYFRDQIAKYKEMQKKKITDQDTPSISEKTIEHIIEQKTNIPVGDLKEKEQSQLIHLAEDLKSHVIGQDDAVDKIAKAIRRNRVGLGTPNRPIGSFLFVGPTGVGKTELSKQLAIELFGSADSMIRFDMSEYMEKHSVAKLVGAPPGYVGYDEAGQLTEKVRHNPYSLILLDEVEKAHPDVMHMFLQVLDDGRLTDGQGRTVSFKDAIIIMTSNAGTGKTEASVGFGAAREGRTNSVLGELGNFFSPEFMNRFDGIIEFKALSKDNLLQIVELMLADVNKRLSSNNIRLDVTDKVKEKLVDLGYDPKMGARPLRRTIQDYIEDTITDYYLENPSEKDLKAVMTSKGNIQIKSAKKAEVKSSEKEK</sequence>
<reference key="1">
    <citation type="journal article" date="2001" name="Science">
        <title>Complete genome sequence of a virulent isolate of Streptococcus pneumoniae.</title>
        <authorList>
            <person name="Tettelin H."/>
            <person name="Nelson K.E."/>
            <person name="Paulsen I.T."/>
            <person name="Eisen J.A."/>
            <person name="Read T.D."/>
            <person name="Peterson S.N."/>
            <person name="Heidelberg J.F."/>
            <person name="DeBoy R.T."/>
            <person name="Haft D.H."/>
            <person name="Dodson R.J."/>
            <person name="Durkin A.S."/>
            <person name="Gwinn M.L."/>
            <person name="Kolonay J.F."/>
            <person name="Nelson W.C."/>
            <person name="Peterson J.D."/>
            <person name="Umayam L.A."/>
            <person name="White O."/>
            <person name="Salzberg S.L."/>
            <person name="Lewis M.R."/>
            <person name="Radune D."/>
            <person name="Holtzapple E.K."/>
            <person name="Khouri H.M."/>
            <person name="Wolf A.M."/>
            <person name="Utterback T.R."/>
            <person name="Hansen C.L."/>
            <person name="McDonald L.A."/>
            <person name="Feldblyum T.V."/>
            <person name="Angiuoli S.V."/>
            <person name="Dickinson T."/>
            <person name="Hickey E.K."/>
            <person name="Holt I.E."/>
            <person name="Loftus B.J."/>
            <person name="Yang F."/>
            <person name="Smith H.O."/>
            <person name="Venter J.C."/>
            <person name="Dougherty B.A."/>
            <person name="Morrison D.A."/>
            <person name="Hollingshead S.K."/>
            <person name="Fraser C.M."/>
        </authorList>
    </citation>
    <scope>NUCLEOTIDE SEQUENCE [LARGE SCALE GENOMIC DNA]</scope>
    <source>
        <strain>ATCC BAA-334 / TIGR4</strain>
    </source>
</reference>
<reference key="2">
    <citation type="journal article" date="1993" name="Mol. Microbiol.">
        <title>Genetic identification of exported proteins in Streptococcus pneumoniae.</title>
        <authorList>
            <person name="Pearce B.J."/>
            <person name="Yin Y.B."/>
            <person name="Masure H.R."/>
        </authorList>
    </citation>
    <scope>NUCLEOTIDE SEQUENCE [GENOMIC DNA] OF 600-692</scope>
    <source>
        <strain>R6x</strain>
    </source>
</reference>
<name>CLPE_STRPN</name>
<dbReference type="EMBL" id="AE005672">
    <property type="protein sequence ID" value="AAK74952.1"/>
    <property type="molecule type" value="Genomic_DNA"/>
</dbReference>
<dbReference type="EMBL" id="L20558">
    <property type="protein sequence ID" value="AAA26880.1"/>
    <property type="molecule type" value="Genomic_DNA"/>
</dbReference>
<dbReference type="PIR" id="G95094">
    <property type="entry name" value="G95094"/>
</dbReference>
<dbReference type="RefSeq" id="WP_000882523.1">
    <property type="nucleotide sequence ID" value="NC_003028.3"/>
</dbReference>
<dbReference type="SMR" id="P35594"/>
<dbReference type="PaxDb" id="170187-SP_0820"/>
<dbReference type="EnsemblBacteria" id="AAK74952">
    <property type="protein sequence ID" value="AAK74952"/>
    <property type="gene ID" value="SP_0820"/>
</dbReference>
<dbReference type="KEGG" id="spn:SP_0820"/>
<dbReference type="eggNOG" id="COG0542">
    <property type="taxonomic scope" value="Bacteria"/>
</dbReference>
<dbReference type="PhylomeDB" id="P35594"/>
<dbReference type="BioCyc" id="SPNE170187:G1FZB-839-MONOMER"/>
<dbReference type="Proteomes" id="UP000000585">
    <property type="component" value="Chromosome"/>
</dbReference>
<dbReference type="GO" id="GO:0005737">
    <property type="term" value="C:cytoplasm"/>
    <property type="evidence" value="ECO:0007669"/>
    <property type="project" value="TreeGrafter"/>
</dbReference>
<dbReference type="GO" id="GO:0005886">
    <property type="term" value="C:plasma membrane"/>
    <property type="evidence" value="ECO:0007669"/>
    <property type="project" value="UniProtKB-SubCell"/>
</dbReference>
<dbReference type="GO" id="GO:0005524">
    <property type="term" value="F:ATP binding"/>
    <property type="evidence" value="ECO:0007669"/>
    <property type="project" value="UniProtKB-KW"/>
</dbReference>
<dbReference type="GO" id="GO:0016887">
    <property type="term" value="F:ATP hydrolysis activity"/>
    <property type="evidence" value="ECO:0007669"/>
    <property type="project" value="InterPro"/>
</dbReference>
<dbReference type="GO" id="GO:0008270">
    <property type="term" value="F:zinc ion binding"/>
    <property type="evidence" value="ECO:0007669"/>
    <property type="project" value="UniProtKB-KW"/>
</dbReference>
<dbReference type="GO" id="GO:0034605">
    <property type="term" value="P:cellular response to heat"/>
    <property type="evidence" value="ECO:0007669"/>
    <property type="project" value="TreeGrafter"/>
</dbReference>
<dbReference type="CDD" id="cd00009">
    <property type="entry name" value="AAA"/>
    <property type="match status" value="1"/>
</dbReference>
<dbReference type="CDD" id="cd19499">
    <property type="entry name" value="RecA-like_ClpB_Hsp104-like"/>
    <property type="match status" value="1"/>
</dbReference>
<dbReference type="FunFam" id="3.40.50.300:FF:000025">
    <property type="entry name" value="ATP-dependent Clp protease subunit"/>
    <property type="match status" value="1"/>
</dbReference>
<dbReference type="FunFam" id="3.40.50.300:FF:000010">
    <property type="entry name" value="Chaperone clpB 1, putative"/>
    <property type="match status" value="1"/>
</dbReference>
<dbReference type="Gene3D" id="1.10.8.60">
    <property type="match status" value="2"/>
</dbReference>
<dbReference type="Gene3D" id="3.40.50.300">
    <property type="entry name" value="P-loop containing nucleotide triphosphate hydrolases"/>
    <property type="match status" value="2"/>
</dbReference>
<dbReference type="Gene3D" id="4.10.860.10">
    <property type="entry name" value="UVR domain"/>
    <property type="match status" value="1"/>
</dbReference>
<dbReference type="InterPro" id="IPR003593">
    <property type="entry name" value="AAA+_ATPase"/>
</dbReference>
<dbReference type="InterPro" id="IPR003959">
    <property type="entry name" value="ATPase_AAA_core"/>
</dbReference>
<dbReference type="InterPro" id="IPR019489">
    <property type="entry name" value="Clp_ATPase_C"/>
</dbReference>
<dbReference type="InterPro" id="IPR001270">
    <property type="entry name" value="ClpA/B"/>
</dbReference>
<dbReference type="InterPro" id="IPR018368">
    <property type="entry name" value="ClpA/B_CS1"/>
</dbReference>
<dbReference type="InterPro" id="IPR028299">
    <property type="entry name" value="ClpA/B_CS2"/>
</dbReference>
<dbReference type="InterPro" id="IPR041546">
    <property type="entry name" value="ClpA/ClpB_AAA_lid"/>
</dbReference>
<dbReference type="InterPro" id="IPR050130">
    <property type="entry name" value="ClpA_ClpB"/>
</dbReference>
<dbReference type="InterPro" id="IPR027417">
    <property type="entry name" value="P-loop_NTPase"/>
</dbReference>
<dbReference type="InterPro" id="IPR001943">
    <property type="entry name" value="UVR_dom"/>
</dbReference>
<dbReference type="PANTHER" id="PTHR11638">
    <property type="entry name" value="ATP-DEPENDENT CLP PROTEASE"/>
    <property type="match status" value="1"/>
</dbReference>
<dbReference type="PANTHER" id="PTHR11638:SF175">
    <property type="entry name" value="ATP-DEPENDENT CLP PROTEASE, ATP-BINDING SUBUNIT CLPC"/>
    <property type="match status" value="1"/>
</dbReference>
<dbReference type="Pfam" id="PF00004">
    <property type="entry name" value="AAA"/>
    <property type="match status" value="1"/>
</dbReference>
<dbReference type="Pfam" id="PF07724">
    <property type="entry name" value="AAA_2"/>
    <property type="match status" value="1"/>
</dbReference>
<dbReference type="Pfam" id="PF17871">
    <property type="entry name" value="AAA_lid_9"/>
    <property type="match status" value="1"/>
</dbReference>
<dbReference type="Pfam" id="PF10431">
    <property type="entry name" value="ClpB_D2-small"/>
    <property type="match status" value="1"/>
</dbReference>
<dbReference type="PRINTS" id="PR00300">
    <property type="entry name" value="CLPPROTEASEA"/>
</dbReference>
<dbReference type="SMART" id="SM00382">
    <property type="entry name" value="AAA"/>
    <property type="match status" value="2"/>
</dbReference>
<dbReference type="SMART" id="SM01086">
    <property type="entry name" value="ClpB_D2-small"/>
    <property type="match status" value="1"/>
</dbReference>
<dbReference type="SUPFAM" id="SSF52540">
    <property type="entry name" value="P-loop containing nucleoside triphosphate hydrolases"/>
    <property type="match status" value="2"/>
</dbReference>
<dbReference type="PROSITE" id="PS00870">
    <property type="entry name" value="CLPAB_1"/>
    <property type="match status" value="1"/>
</dbReference>
<dbReference type="PROSITE" id="PS00871">
    <property type="entry name" value="CLPAB_2"/>
    <property type="match status" value="1"/>
</dbReference>
<dbReference type="PROSITE" id="PS50151">
    <property type="entry name" value="UVR"/>
    <property type="match status" value="1"/>
</dbReference>
<proteinExistence type="inferred from homology"/>
<feature type="chain" id="PRO_0000191227" description="ATP-dependent Clp protease ATP-binding subunit ClpE">
    <location>
        <begin position="1"/>
        <end position="752"/>
    </location>
</feature>
<feature type="domain" description="UVR" evidence="3">
    <location>
        <begin position="365"/>
        <end position="400"/>
    </location>
</feature>
<feature type="zinc finger region" description="C4-type" evidence="2">
    <location>
        <begin position="3"/>
        <end position="32"/>
    </location>
</feature>
<feature type="region of interest" description="Disordered" evidence="4">
    <location>
        <begin position="67"/>
        <end position="110"/>
    </location>
</feature>
<feature type="region of interest" description="I">
    <location>
        <begin position="113"/>
        <end position="360"/>
    </location>
</feature>
<feature type="region of interest" description="II">
    <location>
        <begin position="413"/>
        <end position="604"/>
    </location>
</feature>
<feature type="compositionally biased region" description="Gly residues" evidence="4">
    <location>
        <begin position="83"/>
        <end position="94"/>
    </location>
</feature>
<feature type="binding site" evidence="2">
    <location>
        <begin position="158"/>
        <end position="165"/>
    </location>
    <ligand>
        <name>ATP</name>
        <dbReference type="ChEBI" id="CHEBI:30616"/>
    </ligand>
</feature>
<feature type="binding site" evidence="2">
    <location>
        <begin position="487"/>
        <end position="494"/>
    </location>
    <ligand>
        <name>ATP</name>
        <dbReference type="ChEBI" id="CHEBI:30616"/>
    </ligand>
</feature>
<organism>
    <name type="scientific">Streptococcus pneumoniae serotype 4 (strain ATCC BAA-334 / TIGR4)</name>
    <dbReference type="NCBI Taxonomy" id="170187"/>
    <lineage>
        <taxon>Bacteria</taxon>
        <taxon>Bacillati</taxon>
        <taxon>Bacillota</taxon>
        <taxon>Bacilli</taxon>
        <taxon>Lactobacillales</taxon>
        <taxon>Streptococcaceae</taxon>
        <taxon>Streptococcus</taxon>
    </lineage>
</organism>
<protein>
    <recommendedName>
        <fullName>ATP-dependent Clp protease ATP-binding subunit ClpE</fullName>
    </recommendedName>
    <alternativeName>
        <fullName>Exported protein 4</fullName>
    </alternativeName>
</protein>
<comment type="function">
    <text evidence="1">Could be necessary for degrading proteins generated by certain types of stress.</text>
</comment>
<comment type="subcellular location">
    <subcellularLocation>
        <location>Cell membrane</location>
        <topology>Peripheral membrane protein</topology>
    </subcellularLocation>
</comment>
<comment type="induction">
    <text evidence="5">By heat shock.</text>
</comment>
<comment type="similarity">
    <text evidence="5">Belongs to the ClpA/ClpB family. ClpE subfamily.</text>
</comment>
<accession>P35594</accession>
<evidence type="ECO:0000250" key="1"/>
<evidence type="ECO:0000255" key="2"/>
<evidence type="ECO:0000255" key="3">
    <source>
        <dbReference type="PROSITE-ProRule" id="PRU00217"/>
    </source>
</evidence>
<evidence type="ECO:0000256" key="4">
    <source>
        <dbReference type="SAM" id="MobiDB-lite"/>
    </source>
</evidence>
<evidence type="ECO:0000305" key="5"/>
<gene>
    <name type="primary">clpE</name>
    <name type="synonym">exp4</name>
    <name type="ordered locus">SP_0820</name>
</gene>
<keyword id="KW-0067">ATP-binding</keyword>
<keyword id="KW-1003">Cell membrane</keyword>
<keyword id="KW-0143">Chaperone</keyword>
<keyword id="KW-0472">Membrane</keyword>
<keyword id="KW-0479">Metal-binding</keyword>
<keyword id="KW-0547">Nucleotide-binding</keyword>
<keyword id="KW-1185">Reference proteome</keyword>
<keyword id="KW-0677">Repeat</keyword>
<keyword id="KW-0346">Stress response</keyword>
<keyword id="KW-0862">Zinc</keyword>
<keyword id="KW-0863">Zinc-finger</keyword>